<organism>
    <name type="scientific">Arabidopsis thaliana</name>
    <name type="common">Mouse-ear cress</name>
    <dbReference type="NCBI Taxonomy" id="3702"/>
    <lineage>
        <taxon>Eukaryota</taxon>
        <taxon>Viridiplantae</taxon>
        <taxon>Streptophyta</taxon>
        <taxon>Embryophyta</taxon>
        <taxon>Tracheophyta</taxon>
        <taxon>Spermatophyta</taxon>
        <taxon>Magnoliopsida</taxon>
        <taxon>eudicotyledons</taxon>
        <taxon>Gunneridae</taxon>
        <taxon>Pentapetalae</taxon>
        <taxon>rosids</taxon>
        <taxon>malvids</taxon>
        <taxon>Brassicales</taxon>
        <taxon>Brassicaceae</taxon>
        <taxon>Camelineae</taxon>
        <taxon>Arabidopsis</taxon>
    </lineage>
</organism>
<accession>Q9C7I3</accession>
<keyword id="KW-1185">Reference proteome</keyword>
<evidence type="ECO:0000305" key="1"/>
<sequence length="151" mass="17413">MVEAEVEVDVEIKSTADKFFMFSRRSQHASKATRYVQGCDLLEGEWGEVGSILLWKLTVDGEPKVSKDMIEAIDMKMNMIQWRVLEGPLKEEYNIFSKTMKVSPKQGGSGSVVKWNLKYERIDEKVAHLERLLQFFVECVNEIDQYLLSEG</sequence>
<proteinExistence type="evidence at transcript level"/>
<reference key="1">
    <citation type="submission" date="2001-01" db="EMBL/GenBank/DDBJ databases">
        <title>Molecular and phylogenetic analysis of a gene family in Arabidopsis thaliana with similarities to major latex, pathogenesis-related and ripening-induced proteins.</title>
        <authorList>
            <person name="Muller S."/>
            <person name="Klimt S."/>
            <person name="Hauser M.T."/>
        </authorList>
    </citation>
    <scope>NUCLEOTIDE SEQUENCE [GENOMIC DNA]</scope>
    <source>
        <strain>cv. Columbia</strain>
    </source>
</reference>
<reference key="2">
    <citation type="journal article" date="2000" name="Nature">
        <title>Sequence and analysis of chromosome 1 of the plant Arabidopsis thaliana.</title>
        <authorList>
            <person name="Theologis A."/>
            <person name="Ecker J.R."/>
            <person name="Palm C.J."/>
            <person name="Federspiel N.A."/>
            <person name="Kaul S."/>
            <person name="White O."/>
            <person name="Alonso J."/>
            <person name="Altafi H."/>
            <person name="Araujo R."/>
            <person name="Bowman C.L."/>
            <person name="Brooks S.Y."/>
            <person name="Buehler E."/>
            <person name="Chan A."/>
            <person name="Chao Q."/>
            <person name="Chen H."/>
            <person name="Cheuk R.F."/>
            <person name="Chin C.W."/>
            <person name="Chung M.K."/>
            <person name="Conn L."/>
            <person name="Conway A.B."/>
            <person name="Conway A.R."/>
            <person name="Creasy T.H."/>
            <person name="Dewar K."/>
            <person name="Dunn P."/>
            <person name="Etgu P."/>
            <person name="Feldblyum T.V."/>
            <person name="Feng J.-D."/>
            <person name="Fong B."/>
            <person name="Fujii C.Y."/>
            <person name="Gill J.E."/>
            <person name="Goldsmith A.D."/>
            <person name="Haas B."/>
            <person name="Hansen N.F."/>
            <person name="Hughes B."/>
            <person name="Huizar L."/>
            <person name="Hunter J.L."/>
            <person name="Jenkins J."/>
            <person name="Johnson-Hopson C."/>
            <person name="Khan S."/>
            <person name="Khaykin E."/>
            <person name="Kim C.J."/>
            <person name="Koo H.L."/>
            <person name="Kremenetskaia I."/>
            <person name="Kurtz D.B."/>
            <person name="Kwan A."/>
            <person name="Lam B."/>
            <person name="Langin-Hooper S."/>
            <person name="Lee A."/>
            <person name="Lee J.M."/>
            <person name="Lenz C.A."/>
            <person name="Li J.H."/>
            <person name="Li Y.-P."/>
            <person name="Lin X."/>
            <person name="Liu S.X."/>
            <person name="Liu Z.A."/>
            <person name="Luros J.S."/>
            <person name="Maiti R."/>
            <person name="Marziali A."/>
            <person name="Militscher J."/>
            <person name="Miranda M."/>
            <person name="Nguyen M."/>
            <person name="Nierman W.C."/>
            <person name="Osborne B.I."/>
            <person name="Pai G."/>
            <person name="Peterson J."/>
            <person name="Pham P.K."/>
            <person name="Rizzo M."/>
            <person name="Rooney T."/>
            <person name="Rowley D."/>
            <person name="Sakano H."/>
            <person name="Salzberg S.L."/>
            <person name="Schwartz J.R."/>
            <person name="Shinn P."/>
            <person name="Southwick A.M."/>
            <person name="Sun H."/>
            <person name="Tallon L.J."/>
            <person name="Tambunga G."/>
            <person name="Toriumi M.J."/>
            <person name="Town C.D."/>
            <person name="Utterback T."/>
            <person name="Van Aken S."/>
            <person name="Vaysberg M."/>
            <person name="Vysotskaia V.S."/>
            <person name="Walker M."/>
            <person name="Wu D."/>
            <person name="Yu G."/>
            <person name="Fraser C.M."/>
            <person name="Venter J.C."/>
            <person name="Davis R.W."/>
        </authorList>
    </citation>
    <scope>NUCLEOTIDE SEQUENCE [LARGE SCALE GENOMIC DNA]</scope>
    <source>
        <strain>cv. Columbia</strain>
    </source>
</reference>
<reference key="3">
    <citation type="journal article" date="2017" name="Plant J.">
        <title>Araport11: a complete reannotation of the Arabidopsis thaliana reference genome.</title>
        <authorList>
            <person name="Cheng C.Y."/>
            <person name="Krishnakumar V."/>
            <person name="Chan A.P."/>
            <person name="Thibaud-Nissen F."/>
            <person name="Schobel S."/>
            <person name="Town C.D."/>
        </authorList>
    </citation>
    <scope>GENOME REANNOTATION</scope>
    <source>
        <strain>cv. Columbia</strain>
    </source>
</reference>
<reference key="4">
    <citation type="journal article" date="2003" name="Science">
        <title>Empirical analysis of transcriptional activity in the Arabidopsis genome.</title>
        <authorList>
            <person name="Yamada K."/>
            <person name="Lim J."/>
            <person name="Dale J.M."/>
            <person name="Chen H."/>
            <person name="Shinn P."/>
            <person name="Palm C.J."/>
            <person name="Southwick A.M."/>
            <person name="Wu H.C."/>
            <person name="Kim C.J."/>
            <person name="Nguyen M."/>
            <person name="Pham P.K."/>
            <person name="Cheuk R.F."/>
            <person name="Karlin-Newmann G."/>
            <person name="Liu S.X."/>
            <person name="Lam B."/>
            <person name="Sakano H."/>
            <person name="Wu T."/>
            <person name="Yu G."/>
            <person name="Miranda M."/>
            <person name="Quach H.L."/>
            <person name="Tripp M."/>
            <person name="Chang C.H."/>
            <person name="Lee J.M."/>
            <person name="Toriumi M.J."/>
            <person name="Chan M.M."/>
            <person name="Tang C.C."/>
            <person name="Onodera C.S."/>
            <person name="Deng J.M."/>
            <person name="Akiyama K."/>
            <person name="Ansari Y."/>
            <person name="Arakawa T."/>
            <person name="Banh J."/>
            <person name="Banno F."/>
            <person name="Bowser L."/>
            <person name="Brooks S.Y."/>
            <person name="Carninci P."/>
            <person name="Chao Q."/>
            <person name="Choy N."/>
            <person name="Enju A."/>
            <person name="Goldsmith A.D."/>
            <person name="Gurjal M."/>
            <person name="Hansen N.F."/>
            <person name="Hayashizaki Y."/>
            <person name="Johnson-Hopson C."/>
            <person name="Hsuan V.W."/>
            <person name="Iida K."/>
            <person name="Karnes M."/>
            <person name="Khan S."/>
            <person name="Koesema E."/>
            <person name="Ishida J."/>
            <person name="Jiang P.X."/>
            <person name="Jones T."/>
            <person name="Kawai J."/>
            <person name="Kamiya A."/>
            <person name="Meyers C."/>
            <person name="Nakajima M."/>
            <person name="Narusaka M."/>
            <person name="Seki M."/>
            <person name="Sakurai T."/>
            <person name="Satou M."/>
            <person name="Tamse R."/>
            <person name="Vaysberg M."/>
            <person name="Wallender E.K."/>
            <person name="Wong C."/>
            <person name="Yamamura Y."/>
            <person name="Yuan S."/>
            <person name="Shinozaki K."/>
            <person name="Davis R.W."/>
            <person name="Theologis A."/>
            <person name="Ecker J.R."/>
        </authorList>
    </citation>
    <scope>NUCLEOTIDE SEQUENCE [LARGE SCALE MRNA]</scope>
    <source>
        <strain>cv. Columbia</strain>
    </source>
</reference>
<dbReference type="EMBL" id="AJ306145">
    <property type="protein sequence ID" value="CAC83583.1"/>
    <property type="molecule type" value="Genomic_DNA"/>
</dbReference>
<dbReference type="EMBL" id="AC069160">
    <property type="protein sequence ID" value="AAG51469.1"/>
    <property type="molecule type" value="Genomic_DNA"/>
</dbReference>
<dbReference type="EMBL" id="CP002684">
    <property type="protein sequence ID" value="AEE31777.1"/>
    <property type="molecule type" value="Genomic_DNA"/>
</dbReference>
<dbReference type="EMBL" id="BT003878">
    <property type="protein sequence ID" value="AAO41927.1"/>
    <property type="molecule type" value="mRNA"/>
</dbReference>
<dbReference type="EMBL" id="BT004916">
    <property type="protein sequence ID" value="AAO50449.1"/>
    <property type="molecule type" value="mRNA"/>
</dbReference>
<dbReference type="PIR" id="B86474">
    <property type="entry name" value="B86474"/>
</dbReference>
<dbReference type="RefSeq" id="NP_174764.1">
    <property type="nucleotide sequence ID" value="NM_103228.6"/>
</dbReference>
<dbReference type="SMR" id="Q9C7I3"/>
<dbReference type="STRING" id="3702.Q9C7I3"/>
<dbReference type="PaxDb" id="3702-AT1G35310.1"/>
<dbReference type="ProteomicsDB" id="173676"/>
<dbReference type="EnsemblPlants" id="AT1G35310.1">
    <property type="protein sequence ID" value="AT1G35310.1"/>
    <property type="gene ID" value="AT1G35310"/>
</dbReference>
<dbReference type="GeneID" id="840420"/>
<dbReference type="Gramene" id="AT1G35310.1">
    <property type="protein sequence ID" value="AT1G35310.1"/>
    <property type="gene ID" value="AT1G35310"/>
</dbReference>
<dbReference type="KEGG" id="ath:AT1G35310"/>
<dbReference type="Araport" id="AT1G35310"/>
<dbReference type="TAIR" id="AT1G35310">
    <property type="gene designation" value="MLP168"/>
</dbReference>
<dbReference type="eggNOG" id="ENOG502RN75">
    <property type="taxonomic scope" value="Eukaryota"/>
</dbReference>
<dbReference type="HOGENOM" id="CLU_081988_1_0_1"/>
<dbReference type="InParanoid" id="Q9C7I3"/>
<dbReference type="OMA" id="ADKFFMF"/>
<dbReference type="PhylomeDB" id="Q9C7I3"/>
<dbReference type="PRO" id="PR:Q9C7I3"/>
<dbReference type="Proteomes" id="UP000006548">
    <property type="component" value="Chromosome 1"/>
</dbReference>
<dbReference type="ExpressionAtlas" id="Q9C7I3">
    <property type="expression patterns" value="baseline and differential"/>
</dbReference>
<dbReference type="GO" id="GO:0006952">
    <property type="term" value="P:defense response"/>
    <property type="evidence" value="ECO:0007669"/>
    <property type="project" value="InterPro"/>
</dbReference>
<dbReference type="CDD" id="cd07816">
    <property type="entry name" value="Bet_v1-like"/>
    <property type="match status" value="1"/>
</dbReference>
<dbReference type="Gene3D" id="3.30.530.20">
    <property type="match status" value="1"/>
</dbReference>
<dbReference type="InterPro" id="IPR000916">
    <property type="entry name" value="Bet_v_I/MLP"/>
</dbReference>
<dbReference type="InterPro" id="IPR051761">
    <property type="entry name" value="MLP-like_ligand-binding"/>
</dbReference>
<dbReference type="InterPro" id="IPR023393">
    <property type="entry name" value="START-like_dom_sf"/>
</dbReference>
<dbReference type="PANTHER" id="PTHR31907">
    <property type="entry name" value="MLP-LIKE PROTEIN 423"/>
    <property type="match status" value="1"/>
</dbReference>
<dbReference type="Pfam" id="PF00407">
    <property type="entry name" value="Bet_v_1"/>
    <property type="match status" value="1"/>
</dbReference>
<dbReference type="SMART" id="SM01037">
    <property type="entry name" value="Bet_v_1"/>
    <property type="match status" value="1"/>
</dbReference>
<dbReference type="SUPFAM" id="SSF55961">
    <property type="entry name" value="Bet v1-like"/>
    <property type="match status" value="1"/>
</dbReference>
<name>ML168_ARATH</name>
<comment type="similarity">
    <text evidence="1">Belongs to the MLP family.</text>
</comment>
<feature type="chain" id="PRO_0000210073" description="MLP-like protein 168">
    <location>
        <begin position="1"/>
        <end position="151"/>
    </location>
</feature>
<protein>
    <recommendedName>
        <fullName>MLP-like protein 168</fullName>
    </recommendedName>
</protein>
<gene>
    <name type="primary">MLP168</name>
    <name type="ordered locus">At1g35310</name>
    <name type="ORF">T9I1.8</name>
</gene>